<reference key="1">
    <citation type="journal article" date="1988" name="J. Biochem.">
        <title>Primary structure of Saccharomyces cerevisiae NADPH-cytochrome P450 reductase deduced from nucleotide sequence of its cloned gene.</title>
        <authorList>
            <person name="Yabusaki Y."/>
            <person name="Murakami H."/>
            <person name="Ohkawa H."/>
        </authorList>
    </citation>
    <scope>NUCLEOTIDE SEQUENCE [GENOMIC DNA]</scope>
    <scope>PROTEIN SEQUENCE OF 2-13 AND 45-62</scope>
</reference>
<reference key="2">
    <citation type="journal article" date="1994" name="Science">
        <title>Complete nucleotide sequence of Saccharomyces cerevisiae chromosome VIII.</title>
        <authorList>
            <person name="Johnston M."/>
            <person name="Andrews S."/>
            <person name="Brinkman R."/>
            <person name="Cooper J."/>
            <person name="Ding H."/>
            <person name="Dover J."/>
            <person name="Du Z."/>
            <person name="Favello A."/>
            <person name="Fulton L."/>
            <person name="Gattung S."/>
            <person name="Geisel C."/>
            <person name="Kirsten J."/>
            <person name="Kucaba T."/>
            <person name="Hillier L.W."/>
            <person name="Jier M."/>
            <person name="Johnston L."/>
            <person name="Langston Y."/>
            <person name="Latreille P."/>
            <person name="Louis E.J."/>
            <person name="Macri C."/>
            <person name="Mardis E."/>
            <person name="Menezes S."/>
            <person name="Mouser L."/>
            <person name="Nhan M."/>
            <person name="Rifkin L."/>
            <person name="Riles L."/>
            <person name="St Peter H."/>
            <person name="Trevaskis E."/>
            <person name="Vaughan K."/>
            <person name="Vignati D."/>
            <person name="Wilcox L."/>
            <person name="Wohldman P."/>
            <person name="Waterston R."/>
            <person name="Wilson R."/>
            <person name="Vaudin M."/>
        </authorList>
    </citation>
    <scope>NUCLEOTIDE SEQUENCE [LARGE SCALE GENOMIC DNA]</scope>
    <source>
        <strain>ATCC 204508 / S288c</strain>
    </source>
</reference>
<reference key="3">
    <citation type="journal article" date="2014" name="G3 (Bethesda)">
        <title>The reference genome sequence of Saccharomyces cerevisiae: Then and now.</title>
        <authorList>
            <person name="Engel S.R."/>
            <person name="Dietrich F.S."/>
            <person name="Fisk D.G."/>
            <person name="Binkley G."/>
            <person name="Balakrishnan R."/>
            <person name="Costanzo M.C."/>
            <person name="Dwight S.S."/>
            <person name="Hitz B.C."/>
            <person name="Karra K."/>
            <person name="Nash R.S."/>
            <person name="Weng S."/>
            <person name="Wong E.D."/>
            <person name="Lloyd P."/>
            <person name="Skrzypek M.S."/>
            <person name="Miyasato S.R."/>
            <person name="Simison M."/>
            <person name="Cherry J.M."/>
        </authorList>
    </citation>
    <scope>GENOME REANNOTATION</scope>
    <source>
        <strain>ATCC 204508 / S288c</strain>
    </source>
</reference>
<reference key="4">
    <citation type="journal article" date="2007" name="Genome Res.">
        <title>Approaching a complete repository of sequence-verified protein-encoding clones for Saccharomyces cerevisiae.</title>
        <authorList>
            <person name="Hu Y."/>
            <person name="Rolfs A."/>
            <person name="Bhullar B."/>
            <person name="Murthy T.V.S."/>
            <person name="Zhu C."/>
            <person name="Berger M.F."/>
            <person name="Camargo A.A."/>
            <person name="Kelley F."/>
            <person name="McCarron S."/>
            <person name="Jepson D."/>
            <person name="Richardson A."/>
            <person name="Raphael J."/>
            <person name="Moreira D."/>
            <person name="Taycher E."/>
            <person name="Zuo D."/>
            <person name="Mohr S."/>
            <person name="Kane M.F."/>
            <person name="Williamson J."/>
            <person name="Simpson A.J.G."/>
            <person name="Bulyk M.L."/>
            <person name="Harlow E."/>
            <person name="Marsischky G."/>
            <person name="Kolodner R.D."/>
            <person name="LaBaer J."/>
        </authorList>
    </citation>
    <scope>NUCLEOTIDE SEQUENCE [GENOMIC DNA]</scope>
    <source>
        <strain>ATCC 204508 / S288c</strain>
    </source>
</reference>
<reference key="5">
    <citation type="journal article" date="1992" name="J. Biol. Chem.">
        <title>Multiple regulatory elements control expression of the gene encoding the Saccharomyces cerevisiae cytochrome P450, lanosterol 14 alpha-demethylase (ERG11).</title>
        <authorList>
            <person name="Turi T.G."/>
            <person name="Loper J.C."/>
        </authorList>
    </citation>
    <scope>FUNCTION</scope>
</reference>
<reference key="6">
    <citation type="journal article" date="1997" name="FEMS Microbiol. Lett.">
        <title>Cytochrome P-450 reductase is responsible for the ferrireductase activity associated with isolated plasma membranes of Saccharomyces cerevisiae.</title>
        <authorList>
            <person name="Lesuisse E."/>
            <person name="Casteras-Simon M."/>
            <person name="Labbe P."/>
        </authorList>
    </citation>
    <scope>FUNCTION</scope>
    <scope>CATALYTIC ACTIVITY</scope>
    <scope>SUBCELLULAR LOCATION</scope>
    <scope>INDUCTION</scope>
</reference>
<reference key="7">
    <citation type="journal article" date="1998" name="J. Biol. Chem.">
        <title>The N-terminal membrane domain of yeast NADPH-cytochrome P450 (CYP) oxidoreductase is not required for catalytic activity in sterol biosynthesis or in reconstitution of CYP activity.</title>
        <authorList>
            <person name="Venkateswarlu K."/>
            <person name="Lamb D.C."/>
            <person name="Kelly D.E."/>
            <person name="Manning N.J."/>
            <person name="Kelly S.L."/>
        </authorList>
    </citation>
    <scope>FUNCTION</scope>
    <scope>CATALYTIC ACTIVITY</scope>
    <scope>COFACTOR</scope>
    <scope>SUBCELLULAR LOCATION</scope>
    <scope>TOPOLOGY</scope>
    <scope>DISRUPTION PHENOTYPE</scope>
</reference>
<reference key="8">
    <citation type="journal article" date="2001" name="Biochem. Biophys. Res. Commun.">
        <title>Activities and kinetic mechanisms of native and soluble NADPH-cytochrome P450 reductase.</title>
        <authorList>
            <person name="Lamb D.C."/>
            <person name="Warrilow A.G."/>
            <person name="Venkateswarlu K."/>
            <person name="Kelly D.E."/>
            <person name="Kelly S.L."/>
        </authorList>
    </citation>
    <scope>FUNCTION</scope>
    <scope>CATALYTIC ACTIVITY</scope>
    <scope>BIOPHYSICOCHEMICAL PROPERTIES</scope>
    <scope>TOPOLOGY</scope>
</reference>
<reference key="9">
    <citation type="journal article" date="2003" name="Nature">
        <title>Global analysis of protein localization in budding yeast.</title>
        <authorList>
            <person name="Huh W.-K."/>
            <person name="Falvo J.V."/>
            <person name="Gerke L.C."/>
            <person name="Carroll A.S."/>
            <person name="Howson R.W."/>
            <person name="Weissman J.S."/>
            <person name="O'Shea E.K."/>
        </authorList>
    </citation>
    <scope>SUBCELLULAR LOCATION [LARGE SCALE ANALYSIS]</scope>
</reference>
<reference key="10">
    <citation type="journal article" date="2003" name="Nature">
        <title>Global analysis of protein expression in yeast.</title>
        <authorList>
            <person name="Ghaemmaghami S."/>
            <person name="Huh W.-K."/>
            <person name="Bower K."/>
            <person name="Howson R.W."/>
            <person name="Belle A."/>
            <person name="Dephoure N."/>
            <person name="O'Shea E.K."/>
            <person name="Weissman J.S."/>
        </authorList>
    </citation>
    <scope>LEVEL OF PROTEIN EXPRESSION [LARGE SCALE ANALYSIS]</scope>
</reference>
<reference key="11">
    <citation type="journal article" date="2003" name="Proc. Natl. Acad. Sci. U.S.A.">
        <title>A subset of membrane-associated proteins is ubiquitinated in response to mutations in the endoplasmic reticulum degradation machinery.</title>
        <authorList>
            <person name="Hitchcock A.L."/>
            <person name="Auld K."/>
            <person name="Gygi S.P."/>
            <person name="Silver P.A."/>
        </authorList>
    </citation>
    <scope>UBIQUITINATION [LARGE SCALE ANALYSIS] AT LYS-666</scope>
    <scope>IDENTIFICATION BY MASS SPECTROMETRY</scope>
</reference>
<reference key="12">
    <citation type="journal article" date="2003" name="Proc. Natl. Acad. Sci. U.S.A.">
        <title>The proteome of Saccharomyces cerevisiae mitochondria.</title>
        <authorList>
            <person name="Sickmann A."/>
            <person name="Reinders J."/>
            <person name="Wagner Y."/>
            <person name="Joppich C."/>
            <person name="Zahedi R.P."/>
            <person name="Meyer H.E."/>
            <person name="Schoenfisch B."/>
            <person name="Perschil I."/>
            <person name="Chacinska A."/>
            <person name="Guiard B."/>
            <person name="Rehling P."/>
            <person name="Pfanner N."/>
            <person name="Meisinger C."/>
        </authorList>
    </citation>
    <scope>SUBCELLULAR LOCATION [LARGE SCALE ANALYSIS]</scope>
</reference>
<reference key="13">
    <citation type="journal article" date="2004" name="Genetics">
        <title>The identification of Pcl1-interacting proteins that genetically interact with Cla4 may indicate a link between G1 progression and mitotic exit.</title>
        <authorList>
            <person name="Keniry M.E."/>
            <person name="Kemp H.A."/>
            <person name="Rivers D.M."/>
            <person name="Sprague G.F. Jr."/>
        </authorList>
    </citation>
    <scope>PHOSPHORYLATION</scope>
    <scope>INTERACTION WITH PCL1</scope>
</reference>
<reference key="14">
    <citation type="journal article" date="2006" name="Mol. Biol. Cell">
        <title>Proteomic analysis of the yeast mitochondrial outer membrane reveals accumulation of a subclass of preproteins.</title>
        <authorList>
            <person name="Zahedi R.P."/>
            <person name="Sickmann A."/>
            <person name="Boehm A.M."/>
            <person name="Winkler C."/>
            <person name="Zufall N."/>
            <person name="Schoenfisch B."/>
            <person name="Guiard B."/>
            <person name="Pfanner N."/>
            <person name="Meisinger C."/>
        </authorList>
    </citation>
    <scope>SUBCELLULAR LOCATION</scope>
    <scope>IDENTIFICATION BY MASS SPECTROMETRY</scope>
</reference>
<reference key="15">
    <citation type="journal article" date="2010" name="ACS Chem. Biol.">
        <title>FMN binding site of yeast NADPH-cytochrome P450 reductase exposed at the surface is highly specific.</title>
        <authorList>
            <person name="Ivanov A.S."/>
            <person name="Gnedenko O.V."/>
            <person name="Molnar A.A."/>
            <person name="Archakov A.I."/>
            <person name="Podust L.M."/>
        </authorList>
    </citation>
    <scope>FMN-BINDING AND FAD-BINDING</scope>
</reference>
<reference key="16">
    <citation type="journal article" date="2012" name="Proteomics">
        <title>Sites of ubiquitin attachment in Saccharomyces cerevisiae.</title>
        <authorList>
            <person name="Starita L.M."/>
            <person name="Lo R.S."/>
            <person name="Eng J.K."/>
            <person name="von Haller P.D."/>
            <person name="Fields S."/>
        </authorList>
    </citation>
    <scope>UBIQUITINATION [LARGE SCALE ANALYSIS] AT LYS-666</scope>
    <scope>IDENTIFICATION BY MASS SPECTROMETRY [LARGE SCALE ANALYSIS]</scope>
</reference>
<reference key="17">
    <citation type="journal article" date="2006" name="Structure">
        <title>A second FMN binding site in yeast NADPH-cytochrome P450 reductase suggests a mechanism of electron transfer by diflavin reductases.</title>
        <authorList>
            <person name="Lamb D.C."/>
            <person name="Kim Y."/>
            <person name="Yermalitskaya L.V."/>
            <person name="Yermalitsky V.N."/>
            <person name="Lepesheva G.I."/>
            <person name="Kelly S.L."/>
            <person name="Waterman M.R."/>
            <person name="Podust L.M."/>
        </authorList>
    </citation>
    <scope>X-RAY CRYSTALLOGRAPHY (2.91 ANGSTROMS) OF 34-691 IN COMPLEX WITH FAD; FMN AND NADP</scope>
</reference>
<reference key="18">
    <citation type="journal article" date="2009" name="EMBO Rep.">
        <title>Structure of the open conformation of a functional chimeric NADPH cytochrome P450 reductase.</title>
        <authorList>
            <person name="Aigrain L."/>
            <person name="Pompon D."/>
            <person name="Morera S."/>
            <person name="Truan G."/>
        </authorList>
    </citation>
    <scope>X-RAY CRYSTALLOGRAPHY (2.50 ANGSTROMS) OF 44-211 IN COMPLEX WITH FMN</scope>
</reference>
<protein>
    <recommendedName>
        <fullName evidence="2">NADPH--cytochrome P450 reductase</fullName>
        <shortName evidence="2">CPR</shortName>
        <shortName evidence="2">P450R</shortName>
        <ecNumber evidence="2">1.6.2.4</ecNumber>
    </recommendedName>
</protein>
<sequence length="691" mass="76772">MPFGIDNTDFTVLAGLVLAVLLYVKRNSIKELLMSDDGDITAVSSGNRDIAQVVTENNKNYLVLYASQTGTAEDYAKKFSKELVAKFNLNVMCADVENYDFESLNDVPVIVSIFISTYGEGDFPDGAVNFEDFICNAEAGALSNLRYNMFGLGNSTYEFFNGAAKKAEKHLSAAGAIRLGKLGEADDGAGTTDEDYMAWKDSILEVLKDELHLDEQEAKFTSQFQYTVLNEITDSMSLGEPSAHYLPSHQLNRNADGIQLGPFDLSQPYIAPIVKSRELFSSNDRNCIHSEFDLSGSNIKYSTGDHLAVWPSNPLEKVEQFLSIFNLDPETIFDLKPLDPTVKVPFPTPTTIGAAIKHYLEITGPVSRQLFSSLIQFAPNADVKEKLTLLSKDKDQFAVEITSKYFNIADALKYLSDGAKWDTVPMQFLVESVPQMTPRYYSISSSSLSEKQTVHVTSIVENFPNPELPDAPPVVGVTTNLLRNIQLAQNNVNIAETNLPVHYDLNGPRKLFANYKLPVHVRRSNFRLPSNPSTPVIMIGPGTGVAPFRGFIRERVAFLESQKKGGNNVSLGKHILFYGSRNTDDFLYQDEWPEYAKKLDGSFEMVVAHSRLPNTKKVYVQDKLKDYEDQVFEMINNGAFIYVCGDAKGMAKGVSTALVGILSRGKSITTDEATELIKMLKTSGRYQEDVW</sequence>
<dbReference type="EC" id="1.6.2.4" evidence="2"/>
<dbReference type="EMBL" id="D13788">
    <property type="protein sequence ID" value="BAA02936.1"/>
    <property type="molecule type" value="Genomic_DNA"/>
</dbReference>
<dbReference type="EMBL" id="U00062">
    <property type="protein sequence ID" value="AAB68904.1"/>
    <property type="molecule type" value="Genomic_DNA"/>
</dbReference>
<dbReference type="EMBL" id="AY693091">
    <property type="protein sequence ID" value="AAT93110.1"/>
    <property type="molecule type" value="Genomic_DNA"/>
</dbReference>
<dbReference type="EMBL" id="BK006934">
    <property type="protein sequence ID" value="DAA06734.1"/>
    <property type="molecule type" value="Genomic_DNA"/>
</dbReference>
<dbReference type="PIR" id="S46735">
    <property type="entry name" value="S46735"/>
</dbReference>
<dbReference type="RefSeq" id="NP_011908.1">
    <property type="nucleotide sequence ID" value="NM_001179172.1"/>
</dbReference>
<dbReference type="PDB" id="2BF4">
    <property type="method" value="X-ray"/>
    <property type="resolution" value="3.00 A"/>
    <property type="chains" value="A/B=47-691"/>
</dbReference>
<dbReference type="PDB" id="2BN4">
    <property type="method" value="X-ray"/>
    <property type="resolution" value="2.91 A"/>
    <property type="chains" value="A/B=47-691"/>
</dbReference>
<dbReference type="PDB" id="2BPO">
    <property type="method" value="X-ray"/>
    <property type="resolution" value="2.90 A"/>
    <property type="chains" value="A/B=47-691"/>
</dbReference>
<dbReference type="PDB" id="3FJO">
    <property type="method" value="X-ray"/>
    <property type="resolution" value="2.50 A"/>
    <property type="chains" value="A=44-211"/>
</dbReference>
<dbReference type="PDBsum" id="2BF4"/>
<dbReference type="PDBsum" id="2BN4"/>
<dbReference type="PDBsum" id="2BPO"/>
<dbReference type="PDBsum" id="3FJO"/>
<dbReference type="SMR" id="P16603"/>
<dbReference type="BioGRID" id="36474">
    <property type="interactions" value="91"/>
</dbReference>
<dbReference type="DIP" id="DIP-8294N"/>
<dbReference type="FunCoup" id="P16603">
    <property type="interactions" value="1068"/>
</dbReference>
<dbReference type="IntAct" id="P16603">
    <property type="interactions" value="15"/>
</dbReference>
<dbReference type="MINT" id="P16603"/>
<dbReference type="STRING" id="4932.YHR042W"/>
<dbReference type="GlyGen" id="P16603">
    <property type="glycosylation" value="1 site"/>
</dbReference>
<dbReference type="iPTMnet" id="P16603"/>
<dbReference type="PaxDb" id="4932-YHR042W"/>
<dbReference type="PeptideAtlas" id="P16603"/>
<dbReference type="EnsemblFungi" id="YHR042W_mRNA">
    <property type="protein sequence ID" value="YHR042W"/>
    <property type="gene ID" value="YHR042W"/>
</dbReference>
<dbReference type="GeneID" id="856438"/>
<dbReference type="KEGG" id="sce:YHR042W"/>
<dbReference type="AGR" id="SGD:S000001084"/>
<dbReference type="SGD" id="S000001084">
    <property type="gene designation" value="NCP1"/>
</dbReference>
<dbReference type="VEuPathDB" id="FungiDB:YHR042W"/>
<dbReference type="eggNOG" id="KOG1158">
    <property type="taxonomic scope" value="Eukaryota"/>
</dbReference>
<dbReference type="GeneTree" id="ENSGT00940000156847"/>
<dbReference type="HOGENOM" id="CLU_001570_17_3_1"/>
<dbReference type="InParanoid" id="P16603"/>
<dbReference type="OMA" id="QKRYQRD"/>
<dbReference type="OrthoDB" id="1856718at2759"/>
<dbReference type="BioCyc" id="YEAST:YHR042W-MONOMER"/>
<dbReference type="BRENDA" id="1.6.2.4">
    <property type="organism ID" value="984"/>
</dbReference>
<dbReference type="Reactome" id="R-SCE-1222556">
    <property type="pathway name" value="ROS and RNS production in phagocytes"/>
</dbReference>
<dbReference type="Reactome" id="R-SCE-1474151">
    <property type="pathway name" value="Tetrahydrobiopterin (BH4) synthesis, recycling, salvage and regulation"/>
</dbReference>
<dbReference type="Reactome" id="R-SCE-203615">
    <property type="pathway name" value="eNOS activation"/>
</dbReference>
<dbReference type="Reactome" id="R-SCE-392154">
    <property type="pathway name" value="Nitric oxide stimulates guanylate cyclase"/>
</dbReference>
<dbReference type="Reactome" id="R-SCE-5218920">
    <property type="pathway name" value="VEGFR2 mediated vascular permeability"/>
</dbReference>
<dbReference type="Reactome" id="R-SCE-5578775">
    <property type="pathway name" value="Ion homeostasis"/>
</dbReference>
<dbReference type="Reactome" id="R-SCE-9009391">
    <property type="pathway name" value="Extra-nuclear estrogen signaling"/>
</dbReference>
<dbReference type="Reactome" id="R-SCE-9033241">
    <property type="pathway name" value="Peroxisomal protein import"/>
</dbReference>
<dbReference type="Reactome" id="R-SCE-9856530">
    <property type="pathway name" value="High laminar flow shear stress activates signaling by PIEZO1 and PECAM1:CDH5:KDR in endothelial cells"/>
</dbReference>
<dbReference type="SABIO-RK" id="P16603"/>
<dbReference type="BioGRID-ORCS" id="856438">
    <property type="hits" value="4 hits in 10 CRISPR screens"/>
</dbReference>
<dbReference type="ChiTaRS" id="CPR1">
    <property type="organism name" value="yeast"/>
</dbReference>
<dbReference type="EvolutionaryTrace" id="P16603"/>
<dbReference type="PRO" id="PR:P16603"/>
<dbReference type="Proteomes" id="UP000002311">
    <property type="component" value="Chromosome VIII"/>
</dbReference>
<dbReference type="RNAct" id="P16603">
    <property type="molecule type" value="protein"/>
</dbReference>
<dbReference type="GO" id="GO:0005829">
    <property type="term" value="C:cytosol"/>
    <property type="evidence" value="ECO:0000318"/>
    <property type="project" value="GO_Central"/>
</dbReference>
<dbReference type="GO" id="GO:0005789">
    <property type="term" value="C:endoplasmic reticulum membrane"/>
    <property type="evidence" value="ECO:0007669"/>
    <property type="project" value="UniProtKB-SubCell"/>
</dbReference>
<dbReference type="GO" id="GO:0005741">
    <property type="term" value="C:mitochondrial outer membrane"/>
    <property type="evidence" value="ECO:0007005"/>
    <property type="project" value="SGD"/>
</dbReference>
<dbReference type="GO" id="GO:0005739">
    <property type="term" value="C:mitochondrion"/>
    <property type="evidence" value="ECO:0007005"/>
    <property type="project" value="SGD"/>
</dbReference>
<dbReference type="GO" id="GO:0005886">
    <property type="term" value="C:plasma membrane"/>
    <property type="evidence" value="ECO:0007669"/>
    <property type="project" value="UniProtKB-SubCell"/>
</dbReference>
<dbReference type="GO" id="GO:0009055">
    <property type="term" value="F:electron transfer activity"/>
    <property type="evidence" value="ECO:0000314"/>
    <property type="project" value="SGD"/>
</dbReference>
<dbReference type="GO" id="GO:0050660">
    <property type="term" value="F:flavin adenine dinucleotide binding"/>
    <property type="evidence" value="ECO:0000318"/>
    <property type="project" value="GO_Central"/>
</dbReference>
<dbReference type="GO" id="GO:0010181">
    <property type="term" value="F:FMN binding"/>
    <property type="evidence" value="ECO:0000318"/>
    <property type="project" value="GO_Central"/>
</dbReference>
<dbReference type="GO" id="GO:0050661">
    <property type="term" value="F:NADP binding"/>
    <property type="evidence" value="ECO:0007669"/>
    <property type="project" value="UniProtKB-UniRule"/>
</dbReference>
<dbReference type="GO" id="GO:0003959">
    <property type="term" value="F:NADPH dehydrogenase activity"/>
    <property type="evidence" value="ECO:0000314"/>
    <property type="project" value="CACAO"/>
</dbReference>
<dbReference type="GO" id="GO:0003958">
    <property type="term" value="F:NADPH-hemoprotein reductase activity"/>
    <property type="evidence" value="ECO:0000314"/>
    <property type="project" value="SGD"/>
</dbReference>
<dbReference type="GO" id="GO:0006696">
    <property type="term" value="P:ergosterol biosynthetic process"/>
    <property type="evidence" value="ECO:0000315"/>
    <property type="project" value="SGD"/>
</dbReference>
<dbReference type="CDD" id="cd06204">
    <property type="entry name" value="CYPOR"/>
    <property type="match status" value="1"/>
</dbReference>
<dbReference type="FunFam" id="1.20.990.10:FF:000009">
    <property type="entry name" value="NADPH--cytochrome P450 reductase"/>
    <property type="match status" value="1"/>
</dbReference>
<dbReference type="FunFam" id="3.40.50.360:FF:000036">
    <property type="entry name" value="NADPH--cytochrome P450 reductase"/>
    <property type="match status" value="1"/>
</dbReference>
<dbReference type="FunFam" id="3.40.50.80:FF:000001">
    <property type="entry name" value="NADPH--cytochrome P450 reductase 1"/>
    <property type="match status" value="1"/>
</dbReference>
<dbReference type="Gene3D" id="3.40.50.360">
    <property type="match status" value="1"/>
</dbReference>
<dbReference type="Gene3D" id="1.20.990.10">
    <property type="entry name" value="NADPH-cytochrome p450 Reductase, Chain A, domain 3"/>
    <property type="match status" value="1"/>
</dbReference>
<dbReference type="Gene3D" id="3.40.50.80">
    <property type="entry name" value="Nucleotide-binding domain of ferredoxin-NADP reductase (FNR) module"/>
    <property type="match status" value="1"/>
</dbReference>
<dbReference type="Gene3D" id="2.40.30.10">
    <property type="entry name" value="Translation factors"/>
    <property type="match status" value="1"/>
</dbReference>
<dbReference type="HAMAP" id="MF_03212">
    <property type="entry name" value="NCPR"/>
    <property type="match status" value="1"/>
</dbReference>
<dbReference type="InterPro" id="IPR003097">
    <property type="entry name" value="CysJ-like_FAD-binding"/>
</dbReference>
<dbReference type="InterPro" id="IPR017927">
    <property type="entry name" value="FAD-bd_FR_type"/>
</dbReference>
<dbReference type="InterPro" id="IPR001094">
    <property type="entry name" value="Flavdoxin-like"/>
</dbReference>
<dbReference type="InterPro" id="IPR008254">
    <property type="entry name" value="Flavodoxin/NO_synth"/>
</dbReference>
<dbReference type="InterPro" id="IPR001709">
    <property type="entry name" value="Flavoprot_Pyr_Nucl_cyt_Rdtase"/>
</dbReference>
<dbReference type="InterPro" id="IPR029039">
    <property type="entry name" value="Flavoprotein-like_sf"/>
</dbReference>
<dbReference type="InterPro" id="IPR039261">
    <property type="entry name" value="FNR_nucleotide-bd"/>
</dbReference>
<dbReference type="InterPro" id="IPR023173">
    <property type="entry name" value="NADPH_Cyt_P450_Rdtase_alpha"/>
</dbReference>
<dbReference type="InterPro" id="IPR001433">
    <property type="entry name" value="OxRdtase_FAD/NAD-bd"/>
</dbReference>
<dbReference type="InterPro" id="IPR023208">
    <property type="entry name" value="P450R"/>
</dbReference>
<dbReference type="InterPro" id="IPR017938">
    <property type="entry name" value="Riboflavin_synthase-like_b-brl"/>
</dbReference>
<dbReference type="PANTHER" id="PTHR19384:SF17">
    <property type="entry name" value="NADPH--CYTOCHROME P450 REDUCTASE"/>
    <property type="match status" value="1"/>
</dbReference>
<dbReference type="PANTHER" id="PTHR19384">
    <property type="entry name" value="NITRIC OXIDE SYNTHASE-RELATED"/>
    <property type="match status" value="1"/>
</dbReference>
<dbReference type="Pfam" id="PF00667">
    <property type="entry name" value="FAD_binding_1"/>
    <property type="match status" value="1"/>
</dbReference>
<dbReference type="Pfam" id="PF00258">
    <property type="entry name" value="Flavodoxin_1"/>
    <property type="match status" value="1"/>
</dbReference>
<dbReference type="Pfam" id="PF00175">
    <property type="entry name" value="NAD_binding_1"/>
    <property type="match status" value="1"/>
</dbReference>
<dbReference type="PIRSF" id="PIRSF000208">
    <property type="entry name" value="P450R"/>
    <property type="match status" value="1"/>
</dbReference>
<dbReference type="PRINTS" id="PR00369">
    <property type="entry name" value="FLAVODOXIN"/>
</dbReference>
<dbReference type="PRINTS" id="PR00371">
    <property type="entry name" value="FPNCR"/>
</dbReference>
<dbReference type="SUPFAM" id="SSF52343">
    <property type="entry name" value="Ferredoxin reductase-like, C-terminal NADP-linked domain"/>
    <property type="match status" value="1"/>
</dbReference>
<dbReference type="SUPFAM" id="SSF52218">
    <property type="entry name" value="Flavoproteins"/>
    <property type="match status" value="1"/>
</dbReference>
<dbReference type="SUPFAM" id="SSF63380">
    <property type="entry name" value="Riboflavin synthase domain-like"/>
    <property type="match status" value="1"/>
</dbReference>
<dbReference type="PROSITE" id="PS51384">
    <property type="entry name" value="FAD_FR"/>
    <property type="match status" value="1"/>
</dbReference>
<dbReference type="PROSITE" id="PS50902">
    <property type="entry name" value="FLAVODOXIN_LIKE"/>
    <property type="match status" value="1"/>
</dbReference>
<organism>
    <name type="scientific">Saccharomyces cerevisiae (strain ATCC 204508 / S288c)</name>
    <name type="common">Baker's yeast</name>
    <dbReference type="NCBI Taxonomy" id="559292"/>
    <lineage>
        <taxon>Eukaryota</taxon>
        <taxon>Fungi</taxon>
        <taxon>Dikarya</taxon>
        <taxon>Ascomycota</taxon>
        <taxon>Saccharomycotina</taxon>
        <taxon>Saccharomycetes</taxon>
        <taxon>Saccharomycetales</taxon>
        <taxon>Saccharomycetaceae</taxon>
        <taxon>Saccharomyces</taxon>
    </lineage>
</organism>
<proteinExistence type="evidence at protein level"/>
<accession>P16603</accession>
<accession>D3DKZ0</accession>
<gene>
    <name evidence="2" type="primary">NCP1</name>
    <name type="synonym">CPR1</name>
    <name type="synonym">NCPR1</name>
    <name type="synonym">PRD1</name>
    <name evidence="18" type="ordered locus">YHR042W</name>
</gene>
<evidence type="ECO:0000255" key="1"/>
<evidence type="ECO:0000255" key="2">
    <source>
        <dbReference type="HAMAP-Rule" id="MF_03212"/>
    </source>
</evidence>
<evidence type="ECO:0000269" key="3">
    <source>
    </source>
</evidence>
<evidence type="ECO:0000269" key="4">
    <source>
    </source>
</evidence>
<evidence type="ECO:0000269" key="5">
    <source>
    </source>
</evidence>
<evidence type="ECO:0000269" key="6">
    <source>
    </source>
</evidence>
<evidence type="ECO:0000269" key="7">
    <source>
    </source>
</evidence>
<evidence type="ECO:0000269" key="8">
    <source>
    </source>
</evidence>
<evidence type="ECO:0000269" key="9">
    <source>
    </source>
</evidence>
<evidence type="ECO:0000269" key="10">
    <source>
    </source>
</evidence>
<evidence type="ECO:0000269" key="11">
    <source>
    </source>
</evidence>
<evidence type="ECO:0000269" key="12">
    <source>
    </source>
</evidence>
<evidence type="ECO:0000269" key="13">
    <source>
    </source>
</evidence>
<evidence type="ECO:0000269" key="14">
    <source>
    </source>
</evidence>
<evidence type="ECO:0000305" key="15"/>
<evidence type="ECO:0000305" key="16">
    <source>
    </source>
</evidence>
<evidence type="ECO:0000305" key="17">
    <source>
    </source>
</evidence>
<evidence type="ECO:0000312" key="18">
    <source>
        <dbReference type="SGD" id="S000001084"/>
    </source>
</evidence>
<evidence type="ECO:0007744" key="19">
    <source>
    </source>
</evidence>
<evidence type="ECO:0007829" key="20">
    <source>
        <dbReference type="PDB" id="2BF4"/>
    </source>
</evidence>
<evidence type="ECO:0007829" key="21">
    <source>
        <dbReference type="PDB" id="2BN4"/>
    </source>
</evidence>
<evidence type="ECO:0007829" key="22">
    <source>
        <dbReference type="PDB" id="2BPO"/>
    </source>
</evidence>
<evidence type="ECO:0007829" key="23">
    <source>
        <dbReference type="PDB" id="3FJO"/>
    </source>
</evidence>
<keyword id="KW-0002">3D-structure</keyword>
<keyword id="KW-1003">Cell membrane</keyword>
<keyword id="KW-0903">Direct protein sequencing</keyword>
<keyword id="KW-0256">Endoplasmic reticulum</keyword>
<keyword id="KW-0274">FAD</keyword>
<keyword id="KW-0285">Flavoprotein</keyword>
<keyword id="KW-0288">FMN</keyword>
<keyword id="KW-1017">Isopeptide bond</keyword>
<keyword id="KW-0444">Lipid biosynthesis</keyword>
<keyword id="KW-0443">Lipid metabolism</keyword>
<keyword id="KW-0472">Membrane</keyword>
<keyword id="KW-0496">Mitochondrion</keyword>
<keyword id="KW-1000">Mitochondrion outer membrane</keyword>
<keyword id="KW-0521">NADP</keyword>
<keyword id="KW-0560">Oxidoreductase</keyword>
<keyword id="KW-0597">Phosphoprotein</keyword>
<keyword id="KW-1185">Reference proteome</keyword>
<keyword id="KW-0752">Steroid biosynthesis</keyword>
<keyword id="KW-0753">Steroid metabolism</keyword>
<keyword id="KW-0756">Sterol biosynthesis</keyword>
<keyword id="KW-1207">Sterol metabolism</keyword>
<keyword id="KW-0812">Transmembrane</keyword>
<keyword id="KW-1133">Transmembrane helix</keyword>
<keyword id="KW-0832">Ubl conjugation</keyword>
<feature type="initiator methionine" description="Removed" evidence="12">
    <location>
        <position position="1"/>
    </location>
</feature>
<feature type="chain" id="PRO_0000167608" description="NADPH--cytochrome P450 reductase">
    <location>
        <begin position="2"/>
        <end position="691"/>
    </location>
</feature>
<feature type="topological domain" description="Lumenal" evidence="15">
    <location>
        <begin position="2"/>
        <end position="7"/>
    </location>
</feature>
<feature type="transmembrane region" description="Helical" evidence="1">
    <location>
        <begin position="8"/>
        <end position="24"/>
    </location>
</feature>
<feature type="topological domain" description="Cytoplasmic" evidence="15">
    <location>
        <begin position="25"/>
        <end position="691"/>
    </location>
</feature>
<feature type="domain" description="Flavodoxin-like" evidence="2">
    <location>
        <begin position="61"/>
        <end position="204"/>
    </location>
</feature>
<feature type="domain" description="FAD-binding FR-type" evidence="2">
    <location>
        <begin position="266"/>
        <end position="529"/>
    </location>
</feature>
<feature type="binding site" evidence="2 8 11">
    <location>
        <begin position="67"/>
        <end position="72"/>
    </location>
    <ligand>
        <name>FMN</name>
        <dbReference type="ChEBI" id="CHEBI:58210"/>
    </ligand>
</feature>
<feature type="binding site" evidence="8">
    <location>
        <position position="78"/>
    </location>
    <ligand>
        <name>FMN</name>
        <dbReference type="ChEBI" id="CHEBI:58210"/>
    </ligand>
</feature>
<feature type="binding site" evidence="2 8 11">
    <location>
        <begin position="116"/>
        <end position="119"/>
    </location>
    <ligand>
        <name>FMN</name>
        <dbReference type="ChEBI" id="CHEBI:58210"/>
    </ligand>
</feature>
<feature type="binding site" evidence="2 8 11">
    <location>
        <begin position="152"/>
        <end position="161"/>
    </location>
    <ligand>
        <name>FMN</name>
        <dbReference type="ChEBI" id="CHEBI:58210"/>
    </ligand>
</feature>
<feature type="binding site" evidence="2 8">
    <location>
        <position position="187"/>
    </location>
    <ligand>
        <name>FMN</name>
        <dbReference type="ChEBI" id="CHEBI:58210"/>
    </ligand>
</feature>
<feature type="binding site" evidence="2 8">
    <location>
        <position position="285"/>
    </location>
    <ligand>
        <name>NADP(+)</name>
        <dbReference type="ChEBI" id="CHEBI:58349"/>
    </ligand>
</feature>
<feature type="binding site" evidence="2 8">
    <location>
        <begin position="439"/>
        <end position="442"/>
    </location>
    <ligand>
        <name>FAD</name>
        <dbReference type="ChEBI" id="CHEBI:57692"/>
    </ligand>
</feature>
<feature type="binding site" evidence="2 8">
    <location>
        <begin position="457"/>
        <end position="459"/>
    </location>
    <ligand>
        <name>FAD</name>
        <dbReference type="ChEBI" id="CHEBI:57692"/>
    </ligand>
</feature>
<feature type="binding site" evidence="2 8">
    <location>
        <begin position="476"/>
        <end position="479"/>
    </location>
    <ligand>
        <name>FAD</name>
        <dbReference type="ChEBI" id="CHEBI:57692"/>
    </ligand>
</feature>
<feature type="binding site" evidence="2 8">
    <location>
        <position position="543"/>
    </location>
    <ligand>
        <name>NADP(+)</name>
        <dbReference type="ChEBI" id="CHEBI:58349"/>
    </ligand>
</feature>
<feature type="binding site" evidence="2 8">
    <location>
        <begin position="610"/>
        <end position="611"/>
    </location>
    <ligand>
        <name>NADP(+)</name>
        <dbReference type="ChEBI" id="CHEBI:58349"/>
    </ligand>
</feature>
<feature type="binding site" evidence="2 8">
    <location>
        <begin position="617"/>
        <end position="621"/>
    </location>
    <ligand>
        <name>NADP(+)</name>
        <dbReference type="ChEBI" id="CHEBI:58349"/>
    </ligand>
</feature>
<feature type="binding site" evidence="8">
    <location>
        <position position="646"/>
    </location>
    <ligand>
        <name>NADP(+)</name>
        <dbReference type="ChEBI" id="CHEBI:58349"/>
    </ligand>
</feature>
<feature type="binding site" evidence="2 8">
    <location>
        <position position="691"/>
    </location>
    <ligand>
        <name>FAD</name>
        <dbReference type="ChEBI" id="CHEBI:57692"/>
    </ligand>
</feature>
<feature type="cross-link" description="Glycyl lysine isopeptide (Lys-Gly) (interchain with G-Cter in ubiquitin)" evidence="19">
    <location>
        <position position="666"/>
    </location>
</feature>
<feature type="sequence variant">
    <original>V</original>
    <variation>G</variation>
    <location>
        <position position="474"/>
    </location>
</feature>
<feature type="sequence conflict" description="In Ref. 1; BAA02936." evidence="15" ref="1">
    <original>T</original>
    <variation>N</variation>
    <location>
        <position position="423"/>
    </location>
</feature>
<feature type="helix" evidence="23">
    <location>
        <begin position="50"/>
        <end position="56"/>
    </location>
</feature>
<feature type="strand" evidence="23">
    <location>
        <begin position="60"/>
        <end position="66"/>
    </location>
</feature>
<feature type="strand" evidence="23">
    <location>
        <begin position="68"/>
        <end position="70"/>
    </location>
</feature>
<feature type="helix" evidence="23">
    <location>
        <begin position="71"/>
        <end position="87"/>
    </location>
</feature>
<feature type="strand" evidence="23">
    <location>
        <begin position="91"/>
        <end position="95"/>
    </location>
</feature>
<feature type="helix" evidence="23">
    <location>
        <begin position="96"/>
        <end position="98"/>
    </location>
</feature>
<feature type="helix" evidence="23">
    <location>
        <begin position="104"/>
        <end position="106"/>
    </location>
</feature>
<feature type="strand" evidence="23">
    <location>
        <begin position="109"/>
        <end position="116"/>
    </location>
</feature>
<feature type="strand" evidence="23">
    <location>
        <begin position="119"/>
        <end position="121"/>
    </location>
</feature>
<feature type="helix" evidence="23">
    <location>
        <begin position="125"/>
        <end position="127"/>
    </location>
</feature>
<feature type="helix" evidence="23">
    <location>
        <begin position="128"/>
        <end position="136"/>
    </location>
</feature>
<feature type="turn" evidence="23">
    <location>
        <begin position="139"/>
        <end position="144"/>
    </location>
</feature>
<feature type="strand" evidence="23">
    <location>
        <begin position="146"/>
        <end position="153"/>
    </location>
</feature>
<feature type="strand" evidence="23">
    <location>
        <begin position="157"/>
        <end position="159"/>
    </location>
</feature>
<feature type="helix" evidence="23">
    <location>
        <begin position="162"/>
        <end position="173"/>
    </location>
</feature>
<feature type="strand" evidence="23">
    <location>
        <begin position="183"/>
        <end position="186"/>
    </location>
</feature>
<feature type="turn" evidence="23">
    <location>
        <begin position="187"/>
        <end position="190"/>
    </location>
</feature>
<feature type="helix" evidence="23">
    <location>
        <begin position="192"/>
        <end position="210"/>
    </location>
</feature>
<feature type="strand" evidence="21">
    <location>
        <begin position="223"/>
        <end position="226"/>
    </location>
</feature>
<feature type="strand" evidence="21">
    <location>
        <begin position="234"/>
        <end position="239"/>
    </location>
</feature>
<feature type="helix" evidence="22">
    <location>
        <begin position="243"/>
        <end position="245"/>
    </location>
</feature>
<feature type="strand" evidence="22">
    <location>
        <begin position="271"/>
        <end position="278"/>
    </location>
</feature>
<feature type="strand" evidence="22">
    <location>
        <begin position="287"/>
        <end position="293"/>
    </location>
</feature>
<feature type="strand" evidence="22">
    <location>
        <begin position="306"/>
        <end position="309"/>
    </location>
</feature>
<feature type="helix" evidence="22">
    <location>
        <begin position="315"/>
        <end position="325"/>
    </location>
</feature>
<feature type="strand" evidence="22">
    <location>
        <begin position="332"/>
        <end position="334"/>
    </location>
</feature>
<feature type="strand" evidence="22">
    <location>
        <begin position="337"/>
        <end position="339"/>
    </location>
</feature>
<feature type="strand" evidence="22">
    <location>
        <begin position="348"/>
        <end position="351"/>
    </location>
</feature>
<feature type="helix" evidence="22">
    <location>
        <begin position="352"/>
        <end position="358"/>
    </location>
</feature>
<feature type="helix" evidence="22">
    <location>
        <begin position="368"/>
        <end position="374"/>
    </location>
</feature>
<feature type="helix" evidence="21">
    <location>
        <begin position="375"/>
        <end position="377"/>
    </location>
</feature>
<feature type="helix" evidence="22">
    <location>
        <begin position="381"/>
        <end position="390"/>
    </location>
</feature>
<feature type="helix" evidence="22">
    <location>
        <begin position="394"/>
        <end position="400"/>
    </location>
</feature>
<feature type="helix" evidence="22">
    <location>
        <begin position="402"/>
        <end position="404"/>
    </location>
</feature>
<feature type="helix" evidence="22">
    <location>
        <begin position="408"/>
        <end position="416"/>
    </location>
</feature>
<feature type="helix" evidence="22">
    <location>
        <begin position="426"/>
        <end position="432"/>
    </location>
</feature>
<feature type="strand" evidence="22">
    <location>
        <begin position="439"/>
        <end position="443"/>
    </location>
</feature>
<feature type="turn" evidence="22">
    <location>
        <begin position="447"/>
        <end position="449"/>
    </location>
</feature>
<feature type="strand" evidence="22">
    <location>
        <begin position="453"/>
        <end position="459"/>
    </location>
</feature>
<feature type="strand" evidence="20">
    <location>
        <begin position="469"/>
        <end position="471"/>
    </location>
</feature>
<feature type="helix" evidence="22">
    <location>
        <begin position="477"/>
        <end position="489"/>
    </location>
</feature>
<feature type="turn" evidence="22">
    <location>
        <begin position="494"/>
        <end position="496"/>
    </location>
</feature>
<feature type="helix" evidence="22">
    <location>
        <begin position="508"/>
        <end position="510"/>
    </location>
</feature>
<feature type="turn" evidence="22">
    <location>
        <begin position="511"/>
        <end position="515"/>
    </location>
</feature>
<feature type="strand" evidence="22">
    <location>
        <begin position="519"/>
        <end position="522"/>
    </location>
</feature>
<feature type="strand" evidence="22">
    <location>
        <begin position="536"/>
        <end position="541"/>
    </location>
</feature>
<feature type="helix" evidence="22">
    <location>
        <begin position="542"/>
        <end position="545"/>
    </location>
</feature>
<feature type="helix" evidence="22">
    <location>
        <begin position="546"/>
        <end position="560"/>
    </location>
</feature>
<feature type="turn" evidence="21">
    <location>
        <begin position="564"/>
        <end position="566"/>
    </location>
</feature>
<feature type="strand" evidence="22">
    <location>
        <begin position="574"/>
        <end position="585"/>
    </location>
</feature>
<feature type="turn" evidence="22">
    <location>
        <begin position="587"/>
        <end position="591"/>
    </location>
</feature>
<feature type="helix" evidence="22">
    <location>
        <begin position="592"/>
        <end position="599"/>
    </location>
</feature>
<feature type="helix" evidence="22">
    <location>
        <begin position="600"/>
        <end position="602"/>
    </location>
</feature>
<feature type="strand" evidence="22">
    <location>
        <begin position="603"/>
        <end position="610"/>
    </location>
</feature>
<feature type="helix" evidence="22">
    <location>
        <begin position="620"/>
        <end position="626"/>
    </location>
</feature>
<feature type="helix" evidence="22">
    <location>
        <begin position="628"/>
        <end position="635"/>
    </location>
</feature>
<feature type="turn" evidence="22">
    <location>
        <begin position="636"/>
        <end position="638"/>
    </location>
</feature>
<feature type="strand" evidence="22">
    <location>
        <begin position="640"/>
        <end position="645"/>
    </location>
</feature>
<feature type="helix" evidence="22">
    <location>
        <begin position="650"/>
        <end position="665"/>
    </location>
</feature>
<feature type="helix" evidence="22">
    <location>
        <begin position="670"/>
        <end position="682"/>
    </location>
</feature>
<feature type="strand" evidence="22">
    <location>
        <begin position="685"/>
        <end position="690"/>
    </location>
</feature>
<name>NCPR_YEAST</name>
<comment type="function">
    <text evidence="2 3 10 13 14">This enzyme is required for electron transfer from NADP to cytochrome P450 in microsomes. It can also provide electron transfer to heme oxygenase and cytochrome B5. Involved in ergosterol biosynthesis. Has NADPH-dependent ferrireductase activity on the plasma membrane.</text>
</comment>
<comment type="catalytic activity">
    <reaction evidence="2 3 13 14">
        <text>2 oxidized [cytochrome P450] + NADPH = 2 reduced [cytochrome P450] + NADP(+) + H(+)</text>
        <dbReference type="Rhea" id="RHEA:24040"/>
        <dbReference type="Rhea" id="RHEA-COMP:14627"/>
        <dbReference type="Rhea" id="RHEA-COMP:14628"/>
        <dbReference type="ChEBI" id="CHEBI:15378"/>
        <dbReference type="ChEBI" id="CHEBI:55376"/>
        <dbReference type="ChEBI" id="CHEBI:57783"/>
        <dbReference type="ChEBI" id="CHEBI:58349"/>
        <dbReference type="ChEBI" id="CHEBI:60344"/>
        <dbReference type="EC" id="1.6.2.4"/>
    </reaction>
</comment>
<comment type="cofactor">
    <cofactor evidence="2 14">
        <name>FAD</name>
        <dbReference type="ChEBI" id="CHEBI:57692"/>
    </cofactor>
    <text evidence="2 14">Binds 1 FAD per monomer.</text>
</comment>
<comment type="cofactor">
    <cofactor evidence="2 14">
        <name>FMN</name>
        <dbReference type="ChEBI" id="CHEBI:58210"/>
    </cofactor>
    <text evidence="2 14">Binds 1 FMN per monomer.</text>
</comment>
<comment type="biophysicochemical properties">
    <kinetics>
        <KM evidence="3">1.59 uM for cytochrome c</KM>
        <KM evidence="3">1.46 uM for NADPH</KM>
        <text evidence="3">The Vmax of the reaction is 721 pmol/min/pmol enzyme towards cytochrome c, and 662 pmol/min/pmol enzyme toward NADPH.</text>
    </kinetics>
</comment>
<comment type="subunit">
    <text evidence="7 8">Interacts with PCL1.</text>
</comment>
<comment type="subcellular location">
    <subcellularLocation>
        <location evidence="2 4 14">Endoplasmic reticulum membrane</location>
        <topology evidence="2 16 17">Single-pass membrane protein</topology>
        <orientation evidence="2 16 17">Cytoplasmic side</orientation>
    </subcellularLocation>
    <subcellularLocation>
        <location evidence="2 6 9">Mitochondrion outer membrane</location>
        <topology evidence="2 16 17">Single-pass membrane protein</topology>
        <orientation evidence="2 16 17">Cytoplasmic side</orientation>
    </subcellularLocation>
    <subcellularLocation>
        <location evidence="2 13">Cell membrane</location>
        <topology evidence="2 16 17">Single-pass membrane protein</topology>
        <orientation evidence="2 16 17">Cytoplasmic side</orientation>
    </subcellularLocation>
</comment>
<comment type="induction">
    <text evidence="13">By galactose and on the plasma membrane by iron or copper deficiency. Repressed by glucose.</text>
</comment>
<comment type="PTM">
    <text evidence="7">Phosphorylated by the cyclin-CDK PCL1-PHO85.</text>
</comment>
<comment type="disruption phenotype">
    <text evidence="14">Accumulates 20% of ergosterol of wild type.</text>
</comment>
<comment type="miscellaneous">
    <text evidence="5">Present with 46600 molecules/cell in log phase SD medium.</text>
</comment>
<comment type="similarity">
    <text evidence="2">Belongs to the NADPH--cytochrome P450 reductase family.</text>
</comment>
<comment type="similarity">
    <text evidence="2">In the N-terminal section; belongs to the flavodoxin family.</text>
</comment>
<comment type="similarity">
    <text evidence="2">In the C-terminal section; belongs to the flavoprotein pyridine nucleotide cytochrome reductase family.</text>
</comment>